<dbReference type="EMBL" id="BC106558">
    <property type="protein sequence ID" value="AAI06559.1"/>
    <property type="molecule type" value="mRNA"/>
</dbReference>
<dbReference type="RefSeq" id="NP_001090118.1">
    <property type="nucleotide sequence ID" value="NM_001096649.1"/>
</dbReference>
<dbReference type="SMR" id="Q3KPU0"/>
<dbReference type="DNASU" id="735196"/>
<dbReference type="GeneID" id="735196"/>
<dbReference type="KEGG" id="xla:735196"/>
<dbReference type="AGR" id="Xenbase:XB-GENE-6254256"/>
<dbReference type="CTD" id="735196"/>
<dbReference type="Xenbase" id="XB-GENE-6254256">
    <property type="gene designation" value="sh3bgrl2.S"/>
</dbReference>
<dbReference type="OrthoDB" id="9932926at2759"/>
<dbReference type="Proteomes" id="UP000186698">
    <property type="component" value="Chromosome 5S"/>
</dbReference>
<dbReference type="Bgee" id="735196">
    <property type="expression patterns" value="Expressed in liver and 19 other cell types or tissues"/>
</dbReference>
<dbReference type="GO" id="GO:0005737">
    <property type="term" value="C:cytoplasm"/>
    <property type="evidence" value="ECO:0000318"/>
    <property type="project" value="GO_Central"/>
</dbReference>
<dbReference type="GO" id="GO:0005634">
    <property type="term" value="C:nucleus"/>
    <property type="evidence" value="ECO:0007669"/>
    <property type="project" value="UniProtKB-SubCell"/>
</dbReference>
<dbReference type="GO" id="GO:0017124">
    <property type="term" value="F:SH3 domain binding"/>
    <property type="evidence" value="ECO:0007669"/>
    <property type="project" value="UniProtKB-KW"/>
</dbReference>
<dbReference type="CDD" id="cd03030">
    <property type="entry name" value="GRX_SH3BGR"/>
    <property type="match status" value="1"/>
</dbReference>
<dbReference type="Gene3D" id="3.40.30.10">
    <property type="entry name" value="Glutaredoxin"/>
    <property type="match status" value="1"/>
</dbReference>
<dbReference type="InterPro" id="IPR006993">
    <property type="entry name" value="Glut_rich_SH3-bd"/>
</dbReference>
<dbReference type="InterPro" id="IPR051033">
    <property type="entry name" value="SH3BGR"/>
</dbReference>
<dbReference type="InterPro" id="IPR036249">
    <property type="entry name" value="Thioredoxin-like_sf"/>
</dbReference>
<dbReference type="PANTHER" id="PTHR12232">
    <property type="entry name" value="SH3 DOMAIN-BINDING GLUTAMIC ACID-RICH-LIKE PROTEIN"/>
    <property type="match status" value="1"/>
</dbReference>
<dbReference type="PANTHER" id="PTHR12232:SF4">
    <property type="entry name" value="SH3 DOMAIN-BINDING GLUTAMIC ACID-RICH-LIKE PROTEIN 2"/>
    <property type="match status" value="1"/>
</dbReference>
<dbReference type="Pfam" id="PF04908">
    <property type="entry name" value="SH3BGR"/>
    <property type="match status" value="1"/>
</dbReference>
<dbReference type="PIRSF" id="PIRSF008142">
    <property type="entry name" value="SH3-bind_E-rich_L"/>
    <property type="match status" value="1"/>
</dbReference>
<dbReference type="SUPFAM" id="SSF52833">
    <property type="entry name" value="Thioredoxin-like"/>
    <property type="match status" value="1"/>
</dbReference>
<comment type="subcellular location">
    <subcellularLocation>
        <location evidence="1">Nucleus</location>
    </subcellularLocation>
</comment>
<comment type="similarity">
    <text evidence="3">Belongs to the SH3BGR family.</text>
</comment>
<sequence>MVIRVFLASSSSSVTIKKRQQEVLQFLEANRIEYEEVDITMLEEKRQWMYKNIPKDRLPAQGNPLPPQIFNNNIYCGDYESFFESKESNTVLLFLQLKARPAQKEL</sequence>
<gene>
    <name type="primary">sh3bgrl2-b</name>
</gene>
<feature type="chain" id="PRO_0000383690" description="SH3 domain-binding glutamic acid-rich-like protein 2-B">
    <location>
        <begin position="1"/>
        <end position="106"/>
    </location>
</feature>
<feature type="short sequence motif" description="SH3-binding" evidence="2">
    <location>
        <begin position="61"/>
        <end position="67"/>
    </location>
</feature>
<accession>Q3KPU0</accession>
<organism>
    <name type="scientific">Xenopus laevis</name>
    <name type="common">African clawed frog</name>
    <dbReference type="NCBI Taxonomy" id="8355"/>
    <lineage>
        <taxon>Eukaryota</taxon>
        <taxon>Metazoa</taxon>
        <taxon>Chordata</taxon>
        <taxon>Craniata</taxon>
        <taxon>Vertebrata</taxon>
        <taxon>Euteleostomi</taxon>
        <taxon>Amphibia</taxon>
        <taxon>Batrachia</taxon>
        <taxon>Anura</taxon>
        <taxon>Pipoidea</taxon>
        <taxon>Pipidae</taxon>
        <taxon>Xenopodinae</taxon>
        <taxon>Xenopus</taxon>
        <taxon>Xenopus</taxon>
    </lineage>
</organism>
<proteinExistence type="inferred from homology"/>
<reference key="1">
    <citation type="submission" date="2005-10" db="EMBL/GenBank/DDBJ databases">
        <authorList>
            <consortium name="NIH - Xenopus Gene Collection (XGC) project"/>
        </authorList>
    </citation>
    <scope>NUCLEOTIDE SEQUENCE [LARGE SCALE MRNA]</scope>
    <source>
        <tissue>Testis</tissue>
    </source>
</reference>
<protein>
    <recommendedName>
        <fullName>SH3 domain-binding glutamic acid-rich-like protein 2-B</fullName>
    </recommendedName>
</protein>
<keyword id="KW-0539">Nucleus</keyword>
<keyword id="KW-1185">Reference proteome</keyword>
<keyword id="KW-0729">SH3-binding</keyword>
<name>SH3LB_XENLA</name>
<evidence type="ECO:0000250" key="1"/>
<evidence type="ECO:0000255" key="2"/>
<evidence type="ECO:0000305" key="3"/>